<gene>
    <name type="primary">rag1</name>
</gene>
<organism>
    <name type="scientific">Ginglymostoma cirratum</name>
    <name type="common">Nurse shark</name>
    <name type="synonym">Squalus cirratus</name>
    <dbReference type="NCBI Taxonomy" id="7801"/>
    <lineage>
        <taxon>Eukaryota</taxon>
        <taxon>Metazoa</taxon>
        <taxon>Chordata</taxon>
        <taxon>Craniata</taxon>
        <taxon>Vertebrata</taxon>
        <taxon>Chondrichthyes</taxon>
        <taxon>Elasmobranchii</taxon>
        <taxon>Galeomorphii</taxon>
        <taxon>Galeoidea</taxon>
        <taxon>Orectolobiformes</taxon>
        <taxon>Ginglymostomatidae</taxon>
        <taxon>Ginglymostoma</taxon>
    </lineage>
</organism>
<evidence type="ECO:0000250" key="1"/>
<evidence type="ECO:0000305" key="2"/>
<accession>Q90523</accession>
<proteinExistence type="inferred from homology"/>
<comment type="function">
    <text evidence="1">Catalytic component of the RAG complex, a multiprotein complex that mediates the DNA cleavage phase during V(D)J recombination. V(D)J recombination assembles a diverse repertoire of immunoglobulin and T-cell receptor genes in developing B and T lymphocytes through rearrangement of different V (variable), in some cases D (diversity), and J (joining) gene segments. In the RAG complex, RAG1 mediates the DNA-binding to the conserved recombination signal sequences (RSS) and catalyzes the DNA cleavage activities by introducing a double-strand break between the RSS and the adjacent coding segment. RAG2 is not a catalytic component but is required for all known catalytic activities. DNA cleavage occurs in 2 steps: a first nick is introduced in the top strand immediately upstream of the heptamer, generating a 3'-hydroxyl group that can attack the phosphodiester bond on the opposite strand in a direct transesterification reaction, thereby creating 4 DNA ends: 2 hairpin coding ends and 2 blunt, 5'-phosphorylated ends. In addition to its endonuclease activity, RAG1 also acts as an E3 ubiquitin-protein ligase that mediates monoubiquitination of histone H3. Histone H3 monoubiquitination is required for the joining step of V(D)J recombination (By similarity).</text>
</comment>
<comment type="catalytic activity">
    <reaction>
        <text>S-ubiquitinyl-[E2 ubiquitin-conjugating enzyme]-L-cysteine + [acceptor protein]-L-lysine = [E2 ubiquitin-conjugating enzyme]-L-cysteine + N(6)-ubiquitinyl-[acceptor protein]-L-lysine.</text>
        <dbReference type="EC" id="2.3.2.27"/>
    </reaction>
</comment>
<comment type="cofactor">
    <cofactor evidence="1">
        <name>Mg(2+)</name>
        <dbReference type="ChEBI" id="CHEBI:18420"/>
    </cofactor>
    <cofactor evidence="1">
        <name>Mn(2+)</name>
        <dbReference type="ChEBI" id="CHEBI:29035"/>
    </cofactor>
    <text evidence="1">Binds 1 divalent metal cation per subunit. Mg(2+) or Mn(2+).</text>
</comment>
<comment type="subunit">
    <text evidence="1">Homodimer. Component of the RAG complex composed of core components rag1 and rag2 (By similarity).</text>
</comment>
<comment type="subcellular location">
    <subcellularLocation>
        <location evidence="1">Nucleus</location>
    </subcellularLocation>
</comment>
<comment type="similarity">
    <text evidence="2">Belongs to the RAG1 family.</text>
</comment>
<name>RAG1_GINCI</name>
<keyword id="KW-0156">Chromatin regulator</keyword>
<keyword id="KW-0233">DNA recombination</keyword>
<keyword id="KW-0238">DNA-binding</keyword>
<keyword id="KW-0255">Endonuclease</keyword>
<keyword id="KW-0378">Hydrolase</keyword>
<keyword id="KW-0479">Metal-binding</keyword>
<keyword id="KW-0511">Multifunctional enzyme</keyword>
<keyword id="KW-0540">Nuclease</keyword>
<keyword id="KW-0539">Nucleus</keyword>
<keyword id="KW-0808">Transferase</keyword>
<keyword id="KW-0833">Ubl conjugation pathway</keyword>
<feature type="chain" id="PRO_0000056010" description="V(D)J recombination-activating protein 1">
    <location>
        <begin position="1" status="less than"/>
        <end position="106" status="greater than"/>
    </location>
</feature>
<feature type="binding site" evidence="1">
    <location>
        <position position="69"/>
    </location>
    <ligand>
        <name>a divalent metal cation</name>
        <dbReference type="ChEBI" id="CHEBI:60240"/>
        <note>catalytic</note>
    </ligand>
</feature>
<feature type="non-terminal residue">
    <location>
        <position position="1"/>
    </location>
</feature>
<feature type="non-terminal residue">
    <location>
        <position position="106"/>
    </location>
</feature>
<protein>
    <recommendedName>
        <fullName>V(D)J recombination-activating protein 1</fullName>
        <shortName>RAG-1</shortName>
    </recommendedName>
    <domain>
        <recommendedName>
            <fullName>Endonuclease RAG1</fullName>
            <ecNumber>3.1.-.-</ecNumber>
        </recommendedName>
    </domain>
    <domain>
        <recommendedName>
            <fullName>E3 ubiquitin-protein ligase RAG1</fullName>
            <ecNumber>2.3.2.27</ecNumber>
        </recommendedName>
        <alternativeName>
            <fullName evidence="2">RING-type E3 ubiquitin transferase RAG1</fullName>
        </alternativeName>
    </domain>
</protein>
<dbReference type="EC" id="3.1.-.-"/>
<dbReference type="EC" id="2.3.2.27"/>
<dbReference type="EMBL" id="U13982">
    <property type="protein sequence ID" value="AAA62610.1"/>
    <property type="molecule type" value="Genomic_DNA"/>
</dbReference>
<dbReference type="PIR" id="I50584">
    <property type="entry name" value="I50584"/>
</dbReference>
<dbReference type="SMR" id="Q90523"/>
<dbReference type="GO" id="GO:0097519">
    <property type="term" value="C:DNA recombinase complex"/>
    <property type="evidence" value="ECO:0007669"/>
    <property type="project" value="TreeGrafter"/>
</dbReference>
<dbReference type="GO" id="GO:1905347">
    <property type="term" value="C:endodeoxyribonuclease complex"/>
    <property type="evidence" value="ECO:0007669"/>
    <property type="project" value="TreeGrafter"/>
</dbReference>
<dbReference type="GO" id="GO:0005634">
    <property type="term" value="C:nucleus"/>
    <property type="evidence" value="ECO:0000250"/>
    <property type="project" value="UniProtKB"/>
</dbReference>
<dbReference type="GO" id="GO:1990238">
    <property type="term" value="F:double-stranded DNA endonuclease activity"/>
    <property type="evidence" value="ECO:0007669"/>
    <property type="project" value="TreeGrafter"/>
</dbReference>
<dbReference type="GO" id="GO:0004519">
    <property type="term" value="F:endonuclease activity"/>
    <property type="evidence" value="ECO:0000250"/>
    <property type="project" value="UniProtKB"/>
</dbReference>
<dbReference type="GO" id="GO:0042393">
    <property type="term" value="F:histone binding"/>
    <property type="evidence" value="ECO:0000250"/>
    <property type="project" value="UniProtKB"/>
</dbReference>
<dbReference type="GO" id="GO:0046872">
    <property type="term" value="F:metal ion binding"/>
    <property type="evidence" value="ECO:0000250"/>
    <property type="project" value="UniProtKB"/>
</dbReference>
<dbReference type="GO" id="GO:0042803">
    <property type="term" value="F:protein homodimerization activity"/>
    <property type="evidence" value="ECO:0000250"/>
    <property type="project" value="UniProtKB"/>
</dbReference>
<dbReference type="GO" id="GO:0043565">
    <property type="term" value="F:sequence-specific DNA binding"/>
    <property type="evidence" value="ECO:0000250"/>
    <property type="project" value="UniProtKB"/>
</dbReference>
<dbReference type="GO" id="GO:0061630">
    <property type="term" value="F:ubiquitin protein ligase activity"/>
    <property type="evidence" value="ECO:0007669"/>
    <property type="project" value="InterPro"/>
</dbReference>
<dbReference type="GO" id="GO:0004842">
    <property type="term" value="F:ubiquitin-protein transferase activity"/>
    <property type="evidence" value="ECO:0000250"/>
    <property type="project" value="UniProtKB"/>
</dbReference>
<dbReference type="GO" id="GO:0008270">
    <property type="term" value="F:zinc ion binding"/>
    <property type="evidence" value="ECO:0000250"/>
    <property type="project" value="UniProtKB"/>
</dbReference>
<dbReference type="GO" id="GO:0002250">
    <property type="term" value="P:adaptive immune response"/>
    <property type="evidence" value="ECO:0007669"/>
    <property type="project" value="TreeGrafter"/>
</dbReference>
<dbReference type="GO" id="GO:0030183">
    <property type="term" value="P:B cell differentiation"/>
    <property type="evidence" value="ECO:0000250"/>
    <property type="project" value="UniProtKB"/>
</dbReference>
<dbReference type="GO" id="GO:0006325">
    <property type="term" value="P:chromatin organization"/>
    <property type="evidence" value="ECO:0007669"/>
    <property type="project" value="UniProtKB-KW"/>
</dbReference>
<dbReference type="GO" id="GO:0033077">
    <property type="term" value="P:T cell differentiation in thymus"/>
    <property type="evidence" value="ECO:0000250"/>
    <property type="project" value="UniProtKB"/>
</dbReference>
<dbReference type="GO" id="GO:0033151">
    <property type="term" value="P:V(D)J recombination"/>
    <property type="evidence" value="ECO:0000250"/>
    <property type="project" value="UniProtKB"/>
</dbReference>
<dbReference type="InterPro" id="IPR024627">
    <property type="entry name" value="RAG1"/>
</dbReference>
<dbReference type="PANTHER" id="PTHR11539:SF0">
    <property type="entry name" value="V(D)J RECOMBINATION-ACTIVATING PROTEIN 1"/>
    <property type="match status" value="1"/>
</dbReference>
<dbReference type="PANTHER" id="PTHR11539">
    <property type="entry name" value="VDJ RECOMBINATION ACTIVATING PROTEIN 1 RAG1"/>
    <property type="match status" value="1"/>
</dbReference>
<dbReference type="Pfam" id="PF12940">
    <property type="entry name" value="RAG1"/>
    <property type="match status" value="1"/>
</dbReference>
<sequence>RSTFPTRECPELLCQYSCNSQRFAELLRTEFKHRYEGKITNYLHKTLAHVPEIIERDGSIGAWASEGNESGNKLFRRFRKMNARQSKSYELEGILKHHWLYTSKYL</sequence>
<reference key="1">
    <citation type="journal article" date="1995" name="Immunogenetics">
        <title>Recombination activating gene 1 (Rag1) in zebrafish and shark.</title>
        <authorList>
            <person name="Greenhalgh P."/>
            <person name="Steiner L.A."/>
        </authorList>
    </citation>
    <scope>NUCLEOTIDE SEQUENCE [GENOMIC DNA]</scope>
</reference>